<feature type="chain" id="PRO_0000341017" description="Ribosome-recycling factor">
    <location>
        <begin position="1"/>
        <end position="181"/>
    </location>
</feature>
<feature type="region of interest" description="Disordered" evidence="2">
    <location>
        <begin position="131"/>
        <end position="154"/>
    </location>
</feature>
<proteinExistence type="inferred from homology"/>
<accession>B1MZ62</accession>
<evidence type="ECO:0000255" key="1">
    <source>
        <dbReference type="HAMAP-Rule" id="MF_00040"/>
    </source>
</evidence>
<evidence type="ECO:0000256" key="2">
    <source>
        <dbReference type="SAM" id="MobiDB-lite"/>
    </source>
</evidence>
<sequence>MAFDLTDAKSRMQGAQDALQRELTSIRTGRANPHILDRIEVEYYGAMTPLNQVASISVPEARVLLITPFDKTALEEIIRAINMSDLGLNPSSDGNIVRLMIPQMTEEGRKDLAKQVKAEAEKAKVSVRNVRRDAMDSVKKEKEMPEDDVRKAENDIQKLTDNNIKAIDDIASEKEKELLTI</sequence>
<dbReference type="EMBL" id="DQ489736">
    <property type="protein sequence ID" value="ACA82814.1"/>
    <property type="molecule type" value="Genomic_DNA"/>
</dbReference>
<dbReference type="RefSeq" id="WP_004909361.1">
    <property type="nucleotide sequence ID" value="NC_010471.1"/>
</dbReference>
<dbReference type="SMR" id="B1MZ62"/>
<dbReference type="STRING" id="349519.LCK_00987"/>
<dbReference type="KEGG" id="lci:LCK_00987"/>
<dbReference type="eggNOG" id="COG0233">
    <property type="taxonomic scope" value="Bacteria"/>
</dbReference>
<dbReference type="HOGENOM" id="CLU_073981_2_0_9"/>
<dbReference type="OrthoDB" id="9804006at2"/>
<dbReference type="Proteomes" id="UP000002166">
    <property type="component" value="Chromosome"/>
</dbReference>
<dbReference type="GO" id="GO:0005737">
    <property type="term" value="C:cytoplasm"/>
    <property type="evidence" value="ECO:0007669"/>
    <property type="project" value="UniProtKB-SubCell"/>
</dbReference>
<dbReference type="GO" id="GO:0043023">
    <property type="term" value="F:ribosomal large subunit binding"/>
    <property type="evidence" value="ECO:0007669"/>
    <property type="project" value="TreeGrafter"/>
</dbReference>
<dbReference type="GO" id="GO:0006415">
    <property type="term" value="P:translational termination"/>
    <property type="evidence" value="ECO:0007669"/>
    <property type="project" value="UniProtKB-UniRule"/>
</dbReference>
<dbReference type="CDD" id="cd00520">
    <property type="entry name" value="RRF"/>
    <property type="match status" value="1"/>
</dbReference>
<dbReference type="FunFam" id="1.10.132.20:FF:000001">
    <property type="entry name" value="Ribosome-recycling factor"/>
    <property type="match status" value="1"/>
</dbReference>
<dbReference type="FunFam" id="3.30.1360.40:FF:000001">
    <property type="entry name" value="Ribosome-recycling factor"/>
    <property type="match status" value="1"/>
</dbReference>
<dbReference type="Gene3D" id="3.30.1360.40">
    <property type="match status" value="1"/>
</dbReference>
<dbReference type="Gene3D" id="1.10.132.20">
    <property type="entry name" value="Ribosome-recycling factor"/>
    <property type="match status" value="1"/>
</dbReference>
<dbReference type="HAMAP" id="MF_00040">
    <property type="entry name" value="RRF"/>
    <property type="match status" value="1"/>
</dbReference>
<dbReference type="InterPro" id="IPR002661">
    <property type="entry name" value="Ribosome_recyc_fac"/>
</dbReference>
<dbReference type="InterPro" id="IPR023584">
    <property type="entry name" value="Ribosome_recyc_fac_dom"/>
</dbReference>
<dbReference type="InterPro" id="IPR036191">
    <property type="entry name" value="RRF_sf"/>
</dbReference>
<dbReference type="NCBIfam" id="TIGR00496">
    <property type="entry name" value="frr"/>
    <property type="match status" value="1"/>
</dbReference>
<dbReference type="PANTHER" id="PTHR20982:SF3">
    <property type="entry name" value="MITOCHONDRIAL RIBOSOME RECYCLING FACTOR PSEUDO 1"/>
    <property type="match status" value="1"/>
</dbReference>
<dbReference type="PANTHER" id="PTHR20982">
    <property type="entry name" value="RIBOSOME RECYCLING FACTOR"/>
    <property type="match status" value="1"/>
</dbReference>
<dbReference type="Pfam" id="PF01765">
    <property type="entry name" value="RRF"/>
    <property type="match status" value="1"/>
</dbReference>
<dbReference type="SUPFAM" id="SSF55194">
    <property type="entry name" value="Ribosome recycling factor, RRF"/>
    <property type="match status" value="1"/>
</dbReference>
<keyword id="KW-0963">Cytoplasm</keyword>
<keyword id="KW-0648">Protein biosynthesis</keyword>
<keyword id="KW-1185">Reference proteome</keyword>
<gene>
    <name evidence="1" type="primary">frr</name>
    <name type="ordered locus">LCK_00987</name>
</gene>
<comment type="function">
    <text evidence="1">Responsible for the release of ribosomes from messenger RNA at the termination of protein biosynthesis. May increase the efficiency of translation by recycling ribosomes from one round of translation to another.</text>
</comment>
<comment type="subcellular location">
    <subcellularLocation>
        <location evidence="1">Cytoplasm</location>
    </subcellularLocation>
</comment>
<comment type="similarity">
    <text evidence="1">Belongs to the RRF family.</text>
</comment>
<reference key="1">
    <citation type="journal article" date="2008" name="J. Bacteriol.">
        <title>Complete genome sequence of Leuconostoc citreum KM20.</title>
        <authorList>
            <person name="Kim J.F."/>
            <person name="Jeong H."/>
            <person name="Lee J.-S."/>
            <person name="Choi S.-H."/>
            <person name="Ha M."/>
            <person name="Hur C.-G."/>
            <person name="Kim J.-S."/>
            <person name="Lee S."/>
            <person name="Park H.-S."/>
            <person name="Park Y.-H."/>
            <person name="Oh T.K."/>
        </authorList>
    </citation>
    <scope>NUCLEOTIDE SEQUENCE [LARGE SCALE GENOMIC DNA]</scope>
    <source>
        <strain>KM20</strain>
    </source>
</reference>
<organism>
    <name type="scientific">Leuconostoc citreum (strain KM20)</name>
    <dbReference type="NCBI Taxonomy" id="349519"/>
    <lineage>
        <taxon>Bacteria</taxon>
        <taxon>Bacillati</taxon>
        <taxon>Bacillota</taxon>
        <taxon>Bacilli</taxon>
        <taxon>Lactobacillales</taxon>
        <taxon>Lactobacillaceae</taxon>
        <taxon>Leuconostoc</taxon>
    </lineage>
</organism>
<name>RRF_LEUCK</name>
<protein>
    <recommendedName>
        <fullName evidence="1">Ribosome-recycling factor</fullName>
        <shortName evidence="1">RRF</shortName>
    </recommendedName>
    <alternativeName>
        <fullName evidence="1">Ribosome-releasing factor</fullName>
    </alternativeName>
</protein>